<evidence type="ECO:0000255" key="1">
    <source>
        <dbReference type="HAMAP-Rule" id="MF_01642"/>
    </source>
</evidence>
<evidence type="ECO:0000269" key="2">
    <source>
    </source>
</evidence>
<evidence type="ECO:0000303" key="3">
    <source>
    </source>
</evidence>
<evidence type="ECO:0000305" key="4"/>
<comment type="function">
    <text evidence="2">Involved in the synthesis of meso-diaminopimelate (m-DAP or DL-DAP), required for both lysine and peptidoglycan biosynthesis. Catalyzes the direct conversion of tetrahydrodipicolinate to LL-diaminopimelate. Is also able to use meso-diaminopimelate, lysine or ornithine as substrates.</text>
</comment>
<comment type="catalytic activity">
    <reaction evidence="1 2">
        <text>(2S,6S)-2,6-diaminopimelate + 2-oxoglutarate = (S)-2,3,4,5-tetrahydrodipicolinate + L-glutamate + H2O + H(+)</text>
        <dbReference type="Rhea" id="RHEA:23988"/>
        <dbReference type="ChEBI" id="CHEBI:15377"/>
        <dbReference type="ChEBI" id="CHEBI:15378"/>
        <dbReference type="ChEBI" id="CHEBI:16810"/>
        <dbReference type="ChEBI" id="CHEBI:16845"/>
        <dbReference type="ChEBI" id="CHEBI:29985"/>
        <dbReference type="ChEBI" id="CHEBI:57609"/>
        <dbReference type="EC" id="2.6.1.83"/>
    </reaction>
</comment>
<comment type="cofactor">
    <cofactor evidence="1 2">
        <name>pyridoxal 5'-phosphate</name>
        <dbReference type="ChEBI" id="CHEBI:597326"/>
    </cofactor>
</comment>
<comment type="biophysicochemical properties">
    <kinetics>
        <KM evidence="2">6 uM for LL-2,6-diaminopimelate (at 30 degrees Celsius and pH 7.6)</KM>
        <KM evidence="2">1.1 mM for 2-oxoglutarate (at 30 degrees Celsius and pH 7.6)</KM>
        <KM evidence="2">5 uM for L-2,3,4,5-tetrahydrodipicolinate (at 30 degrees Celsius and pH 7.6)</KM>
        <KM evidence="2">0.4 mM for glutamic acid (at 30 degrees Celsius and pH 7.6)</KM>
        <Vmax evidence="2">1.84 umol/min/mg enzyme for the forward reaction (at 30 degrees Celsius and pH 7.6)</Vmax>
        <Vmax evidence="2">0.09 umol/min/mg enzyme for the reverse reaction (at 30 degrees Celsius and pH 7.6)</Vmax>
    </kinetics>
</comment>
<comment type="pathway">
    <text evidence="1">Amino-acid biosynthesis; L-lysine biosynthesis via DAP pathway; LL-2,6-diaminopimelate from (S)-tetrahydrodipicolinate (aminotransferase route): step 1/1.</text>
</comment>
<comment type="subunit">
    <text evidence="1">Homodimer.</text>
</comment>
<comment type="similarity">
    <text evidence="1">Belongs to the class-I pyridoxal-phosphate-dependent aminotransferase family. LL-diaminopimelate aminotransferase subfamily.</text>
</comment>
<comment type="sequence caution" evidence="4">
    <conflict type="erroneous initiation">
        <sequence resource="EMBL-CDS" id="CAF23409"/>
    </conflict>
</comment>
<protein>
    <recommendedName>
        <fullName evidence="1 3">LL-diaminopimelate aminotransferase</fullName>
        <shortName evidence="1 3">DAP-AT</shortName>
        <shortName evidence="1 3">DAP-aminotransferase</shortName>
        <shortName evidence="1 3">LL-DAP-aminotransferase</shortName>
        <ecNumber evidence="1 2">2.6.1.83</ecNumber>
    </recommendedName>
</protein>
<gene>
    <name evidence="1" type="primary">dapL</name>
    <name type="synonym">aspC</name>
    <name type="ordered locus">pc0685</name>
</gene>
<accession>Q6MDE0</accession>
<sequence>MVKRNVHLTKLQSGYLFPEINRRKNEFLKKHPSAQLINLGIGDTTQPIPLYISEAMQNFAKQLASEKTYRGYGTEQGSILLREAIAEQYYQGKIDPQEVFVSDGSKCDVGRLQILFGSDATIAVQNPTYPAYVDTGVINGQASFFQTSTKQYQRITYMSCLPENNFFPDLANLPKTDLIYFCSPNNPTGSAATNEQLRELVQFAKKRQSIIIFDAAYASFVRSSHIPRSIYEIEGAKEVAIEVGSFSKMIGFTGVRLGWSVVPKQLRFEDGHSVQQDWERIVCTFFNGASNIAQAGGLAALQKEGLQAIDELSSYYMKNSNILKKAFEECGYKVYGGENVPYLWVHFPQLTSWEAFEILLKQSQLVSVPGSGFGSAGEGFLRFSAFGKQSDITVALPRIKHALLKIKPTVY</sequence>
<dbReference type="EC" id="2.6.1.83" evidence="1 2"/>
<dbReference type="EMBL" id="BX908798">
    <property type="protein sequence ID" value="CAF23409.1"/>
    <property type="status" value="ALT_INIT"/>
    <property type="molecule type" value="Genomic_DNA"/>
</dbReference>
<dbReference type="RefSeq" id="WP_044044859.1">
    <property type="nucleotide sequence ID" value="NC_005861.2"/>
</dbReference>
<dbReference type="SMR" id="Q6MDE0"/>
<dbReference type="STRING" id="264201.pc0685"/>
<dbReference type="eggNOG" id="COG0436">
    <property type="taxonomic scope" value="Bacteria"/>
</dbReference>
<dbReference type="HOGENOM" id="CLU_051433_0_0_0"/>
<dbReference type="OrthoDB" id="9813612at2"/>
<dbReference type="BRENDA" id="2.6.1.83">
    <property type="organism ID" value="10176"/>
</dbReference>
<dbReference type="SABIO-RK" id="Q6MDE0"/>
<dbReference type="UniPathway" id="UPA00034">
    <property type="reaction ID" value="UER00466"/>
</dbReference>
<dbReference type="Proteomes" id="UP000000529">
    <property type="component" value="Chromosome"/>
</dbReference>
<dbReference type="GO" id="GO:0010285">
    <property type="term" value="F:L,L-diaminopimelate aminotransferase activity"/>
    <property type="evidence" value="ECO:0007669"/>
    <property type="project" value="UniProtKB-UniRule"/>
</dbReference>
<dbReference type="GO" id="GO:0030170">
    <property type="term" value="F:pyridoxal phosphate binding"/>
    <property type="evidence" value="ECO:0007669"/>
    <property type="project" value="UniProtKB-UniRule"/>
</dbReference>
<dbReference type="GO" id="GO:0033362">
    <property type="term" value="P:lysine biosynthetic process via diaminopimelate, diaminopimelate-aminotransferase pathway"/>
    <property type="evidence" value="ECO:0007669"/>
    <property type="project" value="UniProtKB-UniRule"/>
</dbReference>
<dbReference type="CDD" id="cd00609">
    <property type="entry name" value="AAT_like"/>
    <property type="match status" value="1"/>
</dbReference>
<dbReference type="FunFam" id="3.40.640.10:FF:000099">
    <property type="entry name" value="LL-diaminopimelate aminotransferase, chloroplastic"/>
    <property type="match status" value="1"/>
</dbReference>
<dbReference type="Gene3D" id="3.90.1150.10">
    <property type="entry name" value="Aspartate Aminotransferase, domain 1"/>
    <property type="match status" value="1"/>
</dbReference>
<dbReference type="Gene3D" id="3.40.640.10">
    <property type="entry name" value="Type I PLP-dependent aspartate aminotransferase-like (Major domain)"/>
    <property type="match status" value="1"/>
</dbReference>
<dbReference type="HAMAP" id="MF_01642">
    <property type="entry name" value="DapL_aminotrans_1"/>
    <property type="match status" value="1"/>
</dbReference>
<dbReference type="InterPro" id="IPR004839">
    <property type="entry name" value="Aminotransferase_I/II_large"/>
</dbReference>
<dbReference type="InterPro" id="IPR019942">
    <property type="entry name" value="DapL/ALD1"/>
</dbReference>
<dbReference type="InterPro" id="IPR015424">
    <property type="entry name" value="PyrdxlP-dep_Trfase"/>
</dbReference>
<dbReference type="InterPro" id="IPR015421">
    <property type="entry name" value="PyrdxlP-dep_Trfase_major"/>
</dbReference>
<dbReference type="InterPro" id="IPR015422">
    <property type="entry name" value="PyrdxlP-dep_Trfase_small"/>
</dbReference>
<dbReference type="NCBIfam" id="TIGR03542">
    <property type="entry name" value="DAPAT_plant"/>
    <property type="match status" value="1"/>
</dbReference>
<dbReference type="PANTHER" id="PTHR43144">
    <property type="entry name" value="AMINOTRANSFERASE"/>
    <property type="match status" value="1"/>
</dbReference>
<dbReference type="Pfam" id="PF00155">
    <property type="entry name" value="Aminotran_1_2"/>
    <property type="match status" value="1"/>
</dbReference>
<dbReference type="SUPFAM" id="SSF53383">
    <property type="entry name" value="PLP-dependent transferases"/>
    <property type="match status" value="1"/>
</dbReference>
<proteinExistence type="evidence at protein level"/>
<reference key="1">
    <citation type="journal article" date="2004" name="Science">
        <title>Illuminating the evolutionary history of chlamydiae.</title>
        <authorList>
            <person name="Horn M."/>
            <person name="Collingro A."/>
            <person name="Schmitz-Esser S."/>
            <person name="Beier C.L."/>
            <person name="Purkhold U."/>
            <person name="Fartmann B."/>
            <person name="Brandt P."/>
            <person name="Nyakatura G.J."/>
            <person name="Droege M."/>
            <person name="Frishman D."/>
            <person name="Rattei T."/>
            <person name="Mewes H.-W."/>
            <person name="Wagner M."/>
        </authorList>
    </citation>
    <scope>NUCLEOTIDE SEQUENCE [LARGE SCALE GENOMIC DNA]</scope>
    <source>
        <strain>UWE25</strain>
    </source>
</reference>
<reference key="2">
    <citation type="journal article" date="2006" name="Proc. Natl. Acad. Sci. U.S.A.">
        <title>L,L-diaminopimelate aminotransferase, a trans-kingdom enzyme shared by Chlamydia and plants for synthesis of diaminopimelate/lysine.</title>
        <authorList>
            <person name="McCoy A.J."/>
            <person name="Adams N.E."/>
            <person name="Hudson A.O."/>
            <person name="Gilvarg C."/>
            <person name="Leustek T."/>
            <person name="Maurelli A.T."/>
        </authorList>
    </citation>
    <scope>FUNCTION</scope>
    <scope>CATALYTIC ACTIVITY</scope>
    <scope>BIOPHYSICOCHEMICAL PROPERTIES</scope>
    <scope>COFACTOR</scope>
    <scope>SUBSTRATE SPECIFICITY</scope>
</reference>
<name>DAPAT_PARUW</name>
<keyword id="KW-0032">Aminotransferase</keyword>
<keyword id="KW-0663">Pyridoxal phosphate</keyword>
<keyword id="KW-1185">Reference proteome</keyword>
<keyword id="KW-0808">Transferase</keyword>
<organism>
    <name type="scientific">Protochlamydia amoebophila (strain UWE25)</name>
    <dbReference type="NCBI Taxonomy" id="264201"/>
    <lineage>
        <taxon>Bacteria</taxon>
        <taxon>Pseudomonadati</taxon>
        <taxon>Chlamydiota</taxon>
        <taxon>Chlamydiia</taxon>
        <taxon>Parachlamydiales</taxon>
        <taxon>Parachlamydiaceae</taxon>
        <taxon>Candidatus Protochlamydia</taxon>
    </lineage>
</organism>
<feature type="chain" id="PRO_0000312005" description="LL-diaminopimelate aminotransferase">
    <location>
        <begin position="1"/>
        <end position="411"/>
    </location>
</feature>
<feature type="binding site" evidence="1">
    <location>
        <position position="15"/>
    </location>
    <ligand>
        <name>substrate</name>
    </ligand>
</feature>
<feature type="binding site" evidence="1">
    <location>
        <position position="42"/>
    </location>
    <ligand>
        <name>substrate</name>
    </ligand>
</feature>
<feature type="binding site" evidence="1">
    <location>
        <position position="72"/>
    </location>
    <ligand>
        <name>pyridoxal 5'-phosphate</name>
        <dbReference type="ChEBI" id="CHEBI:597326"/>
    </ligand>
</feature>
<feature type="binding site" evidence="1">
    <location>
        <begin position="105"/>
        <end position="106"/>
    </location>
    <ligand>
        <name>pyridoxal 5'-phosphate</name>
        <dbReference type="ChEBI" id="CHEBI:597326"/>
    </ligand>
</feature>
<feature type="binding site" evidence="1">
    <location>
        <position position="106"/>
    </location>
    <ligand>
        <name>substrate</name>
    </ligand>
</feature>
<feature type="binding site" evidence="1">
    <location>
        <position position="129"/>
    </location>
    <ligand>
        <name>pyridoxal 5'-phosphate</name>
        <dbReference type="ChEBI" id="CHEBI:597326"/>
    </ligand>
</feature>
<feature type="binding site" evidence="1">
    <location>
        <position position="129"/>
    </location>
    <ligand>
        <name>substrate</name>
    </ligand>
</feature>
<feature type="binding site" evidence="1">
    <location>
        <position position="186"/>
    </location>
    <ligand>
        <name>pyridoxal 5'-phosphate</name>
        <dbReference type="ChEBI" id="CHEBI:597326"/>
    </ligand>
</feature>
<feature type="binding site" evidence="1">
    <location>
        <position position="186"/>
    </location>
    <ligand>
        <name>substrate</name>
    </ligand>
</feature>
<feature type="binding site" evidence="1">
    <location>
        <position position="217"/>
    </location>
    <ligand>
        <name>pyridoxal 5'-phosphate</name>
        <dbReference type="ChEBI" id="CHEBI:597326"/>
    </ligand>
</feature>
<feature type="binding site" evidence="1">
    <location>
        <begin position="245"/>
        <end position="247"/>
    </location>
    <ligand>
        <name>pyridoxal 5'-phosphate</name>
        <dbReference type="ChEBI" id="CHEBI:597326"/>
    </ligand>
</feature>
<feature type="binding site" evidence="1">
    <location>
        <position position="256"/>
    </location>
    <ligand>
        <name>pyridoxal 5'-phosphate</name>
        <dbReference type="ChEBI" id="CHEBI:597326"/>
    </ligand>
</feature>
<feature type="binding site" evidence="1">
    <location>
        <position position="287"/>
    </location>
    <ligand>
        <name>pyridoxal 5'-phosphate</name>
        <dbReference type="ChEBI" id="CHEBI:597326"/>
    </ligand>
</feature>
<feature type="binding site" evidence="1">
    <location>
        <position position="287"/>
    </location>
    <ligand>
        <name>substrate</name>
    </ligand>
</feature>
<feature type="binding site" evidence="1">
    <location>
        <position position="382"/>
    </location>
    <ligand>
        <name>substrate</name>
    </ligand>
</feature>
<feature type="modified residue" description="N6-(pyridoxal phosphate)lysine" evidence="1">
    <location>
        <position position="248"/>
    </location>
</feature>